<feature type="chain" id="PRO_0000204092" description="ETS-related transcription factor Elf-5">
    <location>
        <begin position="1"/>
        <end position="265"/>
    </location>
</feature>
<feature type="domain" description="PNT" evidence="3">
    <location>
        <begin position="43"/>
        <end position="129"/>
    </location>
</feature>
<feature type="DNA-binding region" description="ETS" evidence="2">
    <location>
        <begin position="173"/>
        <end position="254"/>
    </location>
</feature>
<feature type="splice variant" id="VSP_014510" description="In isoform 2, isoform 3 and isoform 4." evidence="6 7 8 9">
    <location>
        <begin position="1"/>
        <end position="10"/>
    </location>
</feature>
<feature type="splice variant" id="VSP_054662" description="In isoform 4." evidence="9">
    <original>ACDSYWTSVHPEYWTKRHVWEWLQFCCDQYKLDTNCISFCNFNISGLQLCSMTQEEFVEAAGLCGEYLYFILQNIRTQGYSFFNDAEESKATIKDY</original>
    <variation>D</variation>
    <location>
        <begin position="51"/>
        <end position="146"/>
    </location>
</feature>
<feature type="splice variant" id="VSP_014511" description="In isoform 3." evidence="7">
    <original>YSFFNDAEESKATIKDYAD</original>
    <variation>QCSEGQTSRGGTRIRTKQL</variation>
    <location>
        <begin position="130"/>
        <end position="148"/>
    </location>
</feature>
<feature type="splice variant" id="VSP_014512" description="In isoform 3." evidence="7">
    <location>
        <begin position="149"/>
        <end position="265"/>
    </location>
</feature>
<feature type="sequence conflict" description="In Ref. 2; AAD22960/AAD22961." evidence="10" ref="2">
    <original>V</original>
    <variation>M</variation>
    <location>
        <position position="250"/>
    </location>
</feature>
<feature type="helix" evidence="11">
    <location>
        <begin position="175"/>
        <end position="184"/>
    </location>
</feature>
<feature type="turn" evidence="11">
    <location>
        <begin position="186"/>
        <end position="188"/>
    </location>
</feature>
<feature type="strand" evidence="11">
    <location>
        <begin position="194"/>
        <end position="197"/>
    </location>
</feature>
<feature type="turn" evidence="11">
    <location>
        <begin position="198"/>
        <end position="201"/>
    </location>
</feature>
<feature type="strand" evidence="11">
    <location>
        <begin position="202"/>
        <end position="204"/>
    </location>
</feature>
<feature type="helix" evidence="11">
    <location>
        <begin position="208"/>
        <end position="218"/>
    </location>
</feature>
<feature type="helix" evidence="11">
    <location>
        <begin position="226"/>
        <end position="239"/>
    </location>
</feature>
<feature type="strand" evidence="11">
    <location>
        <begin position="240"/>
        <end position="243"/>
    </location>
</feature>
<feature type="strand" evidence="11">
    <location>
        <begin position="246"/>
        <end position="253"/>
    </location>
</feature>
<reference key="1">
    <citation type="journal article" date="1998" name="Oncogene">
        <title>A novel transcription factor, ELF5, belongs to the ELF subfamily of ETS genes and maps to human chromosome 11p13-15, a region subject to LOH and rearrangement in human carcinoma cell lines.</title>
        <authorList>
            <person name="Zhou J."/>
            <person name="Ng A.Y."/>
            <person name="Tymms M.J."/>
            <person name="Jermiin L.S."/>
            <person name="Seth A.K."/>
            <person name="Thomas R.S."/>
            <person name="Kola I."/>
        </authorList>
    </citation>
    <scope>NUCLEOTIDE SEQUENCE [MRNA] (ISOFORMS 2 AND 4)</scope>
    <scope>TISSUE SPECIFICITY</scope>
    <source>
        <tissue>Lung</tissue>
    </source>
</reference>
<reference key="2">
    <citation type="journal article" date="1999" name="J. Biol. Chem.">
        <title>Characterization of ESE-2, a novel ESE-1-related Ets transcription factor that is restricted to glandular epithelium and differentiated keratinocytes.</title>
        <authorList>
            <person name="Oettgen P."/>
            <person name="Kas K."/>
            <person name="Dube A."/>
            <person name="Gu X."/>
            <person name="Grall F."/>
            <person name="Thamrongsak U."/>
            <person name="Akbarali Y."/>
            <person name="Finger E."/>
            <person name="Boltax J."/>
            <person name="Endress G."/>
            <person name="Munger K."/>
            <person name="Kunsch C."/>
            <person name="Libermann T.A."/>
        </authorList>
    </citation>
    <scope>NUCLEOTIDE SEQUENCE [MRNA] (ISOFORMS 1 AND 2)</scope>
    <scope>FUNCTION</scope>
    <scope>TISSUE SPECIFICITY</scope>
    <scope>ALTERNATIVE SPLICING</scope>
</reference>
<reference key="3">
    <citation type="journal article" date="2004" name="Nat. Genet.">
        <title>Complete sequencing and characterization of 21,243 full-length human cDNAs.</title>
        <authorList>
            <person name="Ota T."/>
            <person name="Suzuki Y."/>
            <person name="Nishikawa T."/>
            <person name="Otsuki T."/>
            <person name="Sugiyama T."/>
            <person name="Irie R."/>
            <person name="Wakamatsu A."/>
            <person name="Hayashi K."/>
            <person name="Sato H."/>
            <person name="Nagai K."/>
            <person name="Kimura K."/>
            <person name="Makita H."/>
            <person name="Sekine M."/>
            <person name="Obayashi M."/>
            <person name="Nishi T."/>
            <person name="Shibahara T."/>
            <person name="Tanaka T."/>
            <person name="Ishii S."/>
            <person name="Yamamoto J."/>
            <person name="Saito K."/>
            <person name="Kawai Y."/>
            <person name="Isono Y."/>
            <person name="Nakamura Y."/>
            <person name="Nagahari K."/>
            <person name="Murakami K."/>
            <person name="Yasuda T."/>
            <person name="Iwayanagi T."/>
            <person name="Wagatsuma M."/>
            <person name="Shiratori A."/>
            <person name="Sudo H."/>
            <person name="Hosoiri T."/>
            <person name="Kaku Y."/>
            <person name="Kodaira H."/>
            <person name="Kondo H."/>
            <person name="Sugawara M."/>
            <person name="Takahashi M."/>
            <person name="Kanda K."/>
            <person name="Yokoi T."/>
            <person name="Furuya T."/>
            <person name="Kikkawa E."/>
            <person name="Omura Y."/>
            <person name="Abe K."/>
            <person name="Kamihara K."/>
            <person name="Katsuta N."/>
            <person name="Sato K."/>
            <person name="Tanikawa M."/>
            <person name="Yamazaki M."/>
            <person name="Ninomiya K."/>
            <person name="Ishibashi T."/>
            <person name="Yamashita H."/>
            <person name="Murakawa K."/>
            <person name="Fujimori K."/>
            <person name="Tanai H."/>
            <person name="Kimata M."/>
            <person name="Watanabe M."/>
            <person name="Hiraoka S."/>
            <person name="Chiba Y."/>
            <person name="Ishida S."/>
            <person name="Ono Y."/>
            <person name="Takiguchi S."/>
            <person name="Watanabe S."/>
            <person name="Yosida M."/>
            <person name="Hotuta T."/>
            <person name="Kusano J."/>
            <person name="Kanehori K."/>
            <person name="Takahashi-Fujii A."/>
            <person name="Hara H."/>
            <person name="Tanase T.-O."/>
            <person name="Nomura Y."/>
            <person name="Togiya S."/>
            <person name="Komai F."/>
            <person name="Hara R."/>
            <person name="Takeuchi K."/>
            <person name="Arita M."/>
            <person name="Imose N."/>
            <person name="Musashino K."/>
            <person name="Yuuki H."/>
            <person name="Oshima A."/>
            <person name="Sasaki N."/>
            <person name="Aotsuka S."/>
            <person name="Yoshikawa Y."/>
            <person name="Matsunawa H."/>
            <person name="Ichihara T."/>
            <person name="Shiohata N."/>
            <person name="Sano S."/>
            <person name="Moriya S."/>
            <person name="Momiyama H."/>
            <person name="Satoh N."/>
            <person name="Takami S."/>
            <person name="Terashima Y."/>
            <person name="Suzuki O."/>
            <person name="Nakagawa S."/>
            <person name="Senoh A."/>
            <person name="Mizoguchi H."/>
            <person name="Goto Y."/>
            <person name="Shimizu F."/>
            <person name="Wakebe H."/>
            <person name="Hishigaki H."/>
            <person name="Watanabe T."/>
            <person name="Sugiyama A."/>
            <person name="Takemoto M."/>
            <person name="Kawakami B."/>
            <person name="Yamazaki M."/>
            <person name="Watanabe K."/>
            <person name="Kumagai A."/>
            <person name="Itakura S."/>
            <person name="Fukuzumi Y."/>
            <person name="Fujimori Y."/>
            <person name="Komiyama M."/>
            <person name="Tashiro H."/>
            <person name="Tanigami A."/>
            <person name="Fujiwara T."/>
            <person name="Ono T."/>
            <person name="Yamada K."/>
            <person name="Fujii Y."/>
            <person name="Ozaki K."/>
            <person name="Hirao M."/>
            <person name="Ohmori Y."/>
            <person name="Kawabata A."/>
            <person name="Hikiji T."/>
            <person name="Kobatake N."/>
            <person name="Inagaki H."/>
            <person name="Ikema Y."/>
            <person name="Okamoto S."/>
            <person name="Okitani R."/>
            <person name="Kawakami T."/>
            <person name="Noguchi S."/>
            <person name="Itoh T."/>
            <person name="Shigeta K."/>
            <person name="Senba T."/>
            <person name="Matsumura K."/>
            <person name="Nakajima Y."/>
            <person name="Mizuno T."/>
            <person name="Morinaga M."/>
            <person name="Sasaki M."/>
            <person name="Togashi T."/>
            <person name="Oyama M."/>
            <person name="Hata H."/>
            <person name="Watanabe M."/>
            <person name="Komatsu T."/>
            <person name="Mizushima-Sugano J."/>
            <person name="Satoh T."/>
            <person name="Shirai Y."/>
            <person name="Takahashi Y."/>
            <person name="Nakagawa K."/>
            <person name="Okumura K."/>
            <person name="Nagase T."/>
            <person name="Nomura N."/>
            <person name="Kikuchi H."/>
            <person name="Masuho Y."/>
            <person name="Yamashita R."/>
            <person name="Nakai K."/>
            <person name="Yada T."/>
            <person name="Nakamura Y."/>
            <person name="Ohara O."/>
            <person name="Isogai T."/>
            <person name="Sugano S."/>
        </authorList>
    </citation>
    <scope>NUCLEOTIDE SEQUENCE [LARGE SCALE MRNA] (ISOFORMS 1 AND 3)</scope>
    <source>
        <tissue>Kidney</tissue>
    </source>
</reference>
<reference key="4">
    <citation type="journal article" date="2006" name="Nature">
        <title>Human chromosome 11 DNA sequence and analysis including novel gene identification.</title>
        <authorList>
            <person name="Taylor T.D."/>
            <person name="Noguchi H."/>
            <person name="Totoki Y."/>
            <person name="Toyoda A."/>
            <person name="Kuroki Y."/>
            <person name="Dewar K."/>
            <person name="Lloyd C."/>
            <person name="Itoh T."/>
            <person name="Takeda T."/>
            <person name="Kim D.-W."/>
            <person name="She X."/>
            <person name="Barlow K.F."/>
            <person name="Bloom T."/>
            <person name="Bruford E."/>
            <person name="Chang J.L."/>
            <person name="Cuomo C.A."/>
            <person name="Eichler E."/>
            <person name="FitzGerald M.G."/>
            <person name="Jaffe D.B."/>
            <person name="LaButti K."/>
            <person name="Nicol R."/>
            <person name="Park H.-S."/>
            <person name="Seaman C."/>
            <person name="Sougnez C."/>
            <person name="Yang X."/>
            <person name="Zimmer A.R."/>
            <person name="Zody M.C."/>
            <person name="Birren B.W."/>
            <person name="Nusbaum C."/>
            <person name="Fujiyama A."/>
            <person name="Hattori M."/>
            <person name="Rogers J."/>
            <person name="Lander E.S."/>
            <person name="Sakaki Y."/>
        </authorList>
    </citation>
    <scope>NUCLEOTIDE SEQUENCE [LARGE SCALE GENOMIC DNA]</scope>
</reference>
<reference key="5">
    <citation type="submission" date="2005-09" db="EMBL/GenBank/DDBJ databases">
        <authorList>
            <person name="Mural R.J."/>
            <person name="Istrail S."/>
            <person name="Sutton G.G."/>
            <person name="Florea L."/>
            <person name="Halpern A.L."/>
            <person name="Mobarry C.M."/>
            <person name="Lippert R."/>
            <person name="Walenz B."/>
            <person name="Shatkay H."/>
            <person name="Dew I."/>
            <person name="Miller J.R."/>
            <person name="Flanigan M.J."/>
            <person name="Edwards N.J."/>
            <person name="Bolanos R."/>
            <person name="Fasulo D."/>
            <person name="Halldorsson B.V."/>
            <person name="Hannenhalli S."/>
            <person name="Turner R."/>
            <person name="Yooseph S."/>
            <person name="Lu F."/>
            <person name="Nusskern D.R."/>
            <person name="Shue B.C."/>
            <person name="Zheng X.H."/>
            <person name="Zhong F."/>
            <person name="Delcher A.L."/>
            <person name="Huson D.H."/>
            <person name="Kravitz S.A."/>
            <person name="Mouchard L."/>
            <person name="Reinert K."/>
            <person name="Remington K.A."/>
            <person name="Clark A.G."/>
            <person name="Waterman M.S."/>
            <person name="Eichler E.E."/>
            <person name="Adams M.D."/>
            <person name="Hunkapiller M.W."/>
            <person name="Myers E.W."/>
            <person name="Venter J.C."/>
        </authorList>
    </citation>
    <scope>NUCLEOTIDE SEQUENCE [LARGE SCALE GENOMIC DNA]</scope>
</reference>
<reference key="6">
    <citation type="journal article" date="2004" name="Genome Res.">
        <title>The status, quality, and expansion of the NIH full-length cDNA project: the Mammalian Gene Collection (MGC).</title>
        <authorList>
            <consortium name="The MGC Project Team"/>
        </authorList>
    </citation>
    <scope>NUCLEOTIDE SEQUENCE [LARGE SCALE MRNA] (ISOFORM 2)</scope>
    <source>
        <tissue>Urinary bladder</tissue>
    </source>
</reference>
<gene>
    <name type="primary">ELF5</name>
    <name type="synonym">ESE2</name>
</gene>
<evidence type="ECO:0000250" key="1"/>
<evidence type="ECO:0000255" key="2">
    <source>
        <dbReference type="PROSITE-ProRule" id="PRU00237"/>
    </source>
</evidence>
<evidence type="ECO:0000255" key="3">
    <source>
        <dbReference type="PROSITE-ProRule" id="PRU00762"/>
    </source>
</evidence>
<evidence type="ECO:0000269" key="4">
    <source>
    </source>
</evidence>
<evidence type="ECO:0000269" key="5">
    <source>
    </source>
</evidence>
<evidence type="ECO:0000303" key="6">
    <source>
    </source>
</evidence>
<evidence type="ECO:0000303" key="7">
    <source>
    </source>
</evidence>
<evidence type="ECO:0000303" key="8">
    <source>
    </source>
</evidence>
<evidence type="ECO:0000303" key="9">
    <source>
    </source>
</evidence>
<evidence type="ECO:0000305" key="10"/>
<evidence type="ECO:0007829" key="11">
    <source>
        <dbReference type="PDB" id="1WWX"/>
    </source>
</evidence>
<keyword id="KW-0002">3D-structure</keyword>
<keyword id="KW-0010">Activator</keyword>
<keyword id="KW-0025">Alternative splicing</keyword>
<keyword id="KW-0238">DNA-binding</keyword>
<keyword id="KW-0539">Nucleus</keyword>
<keyword id="KW-1267">Proteomics identification</keyword>
<keyword id="KW-1185">Reference proteome</keyword>
<keyword id="KW-0804">Transcription</keyword>
<keyword id="KW-0805">Transcription regulation</keyword>
<sequence>MPSLPHSHRVMLDSVTHSTFLPNASFCDPLMSWTDLFSNEEYYPAFEHQTACDSYWTSVHPEYWTKRHVWEWLQFCCDQYKLDTNCISFCNFNISGLQLCSMTQEEFVEAAGLCGEYLYFILQNIRTQGYSFFNDAEESKATIKDYADSNCLKTSGIKSQDCHSHSRTSLQSSHLWEFVRDLLLSPEENCGILEWEDREQGIFRVVKSEALAKMWGQRKKNDRMTYEKLSRALRYYYKTGILERVDRRLVYKFGKNAHGWQEDKL</sequence>
<dbReference type="EMBL" id="AF049703">
    <property type="protein sequence ID" value="AAC79755.1"/>
    <property type="molecule type" value="mRNA"/>
</dbReference>
<dbReference type="EMBL" id="DQ123839">
    <property type="protein sequence ID" value="AAZ98848.1"/>
    <property type="molecule type" value="mRNA"/>
</dbReference>
<dbReference type="EMBL" id="AF115402">
    <property type="protein sequence ID" value="AAD22960.1"/>
    <property type="molecule type" value="mRNA"/>
</dbReference>
<dbReference type="EMBL" id="AF115403">
    <property type="protein sequence ID" value="AAD22961.1"/>
    <property type="molecule type" value="mRNA"/>
</dbReference>
<dbReference type="EMBL" id="AK074633">
    <property type="protein sequence ID" value="BAC11101.1"/>
    <property type="molecule type" value="mRNA"/>
</dbReference>
<dbReference type="EMBL" id="AK290817">
    <property type="protein sequence ID" value="BAF83506.1"/>
    <property type="molecule type" value="mRNA"/>
</dbReference>
<dbReference type="EMBL" id="AL137224">
    <property type="status" value="NOT_ANNOTATED_CDS"/>
    <property type="molecule type" value="Genomic_DNA"/>
</dbReference>
<dbReference type="EMBL" id="CH471064">
    <property type="protein sequence ID" value="EAW68169.1"/>
    <property type="molecule type" value="Genomic_DNA"/>
</dbReference>
<dbReference type="EMBL" id="BC029743">
    <property type="protein sequence ID" value="AAH29743.1"/>
    <property type="molecule type" value="mRNA"/>
</dbReference>
<dbReference type="CCDS" id="CCDS58129.1">
    <molecule id="Q9UKW6-4"/>
</dbReference>
<dbReference type="CCDS" id="CCDS7892.1">
    <molecule id="Q9UKW6-1"/>
</dbReference>
<dbReference type="CCDS" id="CCDS7893.1">
    <molecule id="Q9UKW6-2"/>
</dbReference>
<dbReference type="RefSeq" id="NP_001230009.1">
    <molecule id="Q9UKW6-4"/>
    <property type="nucleotide sequence ID" value="NM_001243080.2"/>
</dbReference>
<dbReference type="RefSeq" id="NP_001230010.1">
    <property type="nucleotide sequence ID" value="NM_001243081.1"/>
</dbReference>
<dbReference type="RefSeq" id="NP_001413.1">
    <molecule id="Q9UKW6-2"/>
    <property type="nucleotide sequence ID" value="NM_001422.4"/>
</dbReference>
<dbReference type="RefSeq" id="NP_938195.1">
    <molecule id="Q9UKW6-1"/>
    <property type="nucleotide sequence ID" value="NM_198381.2"/>
</dbReference>
<dbReference type="PDB" id="1WWX">
    <property type="method" value="NMR"/>
    <property type="chains" value="A=172-265"/>
</dbReference>
<dbReference type="PDBsum" id="1WWX"/>
<dbReference type="SMR" id="Q9UKW6"/>
<dbReference type="BioGRID" id="108316">
    <property type="interactions" value="47"/>
</dbReference>
<dbReference type="FunCoup" id="Q9UKW6">
    <property type="interactions" value="604"/>
</dbReference>
<dbReference type="IntAct" id="Q9UKW6">
    <property type="interactions" value="45"/>
</dbReference>
<dbReference type="MINT" id="Q9UKW6"/>
<dbReference type="STRING" id="9606.ENSP00000311010"/>
<dbReference type="PhosphoSitePlus" id="Q9UKW6"/>
<dbReference type="BioMuta" id="ELF5"/>
<dbReference type="DMDM" id="68565549"/>
<dbReference type="MassIVE" id="Q9UKW6"/>
<dbReference type="PaxDb" id="9606-ENSP00000311010"/>
<dbReference type="PeptideAtlas" id="Q9UKW6"/>
<dbReference type="ProteomicsDB" id="84900">
    <molecule id="Q9UKW6-1"/>
</dbReference>
<dbReference type="Antibodypedia" id="25870">
    <property type="antibodies" value="258 antibodies from 29 providers"/>
</dbReference>
<dbReference type="DNASU" id="2001"/>
<dbReference type="Ensembl" id="ENST00000257832.7">
    <molecule id="Q9UKW6-2"/>
    <property type="protein sequence ID" value="ENSP00000257832.3"/>
    <property type="gene ID" value="ENSG00000135374.11"/>
</dbReference>
<dbReference type="Ensembl" id="ENST00000312319.6">
    <molecule id="Q9UKW6-1"/>
    <property type="protein sequence ID" value="ENSP00000311010.2"/>
    <property type="gene ID" value="ENSG00000135374.11"/>
</dbReference>
<dbReference type="Ensembl" id="ENST00000429939.6">
    <molecule id="Q9UKW6-4"/>
    <property type="protein sequence ID" value="ENSP00000407589.2"/>
    <property type="gene ID" value="ENSG00000135374.11"/>
</dbReference>
<dbReference type="Ensembl" id="ENST00000532417.1">
    <molecule id="Q9UKW6-3"/>
    <property type="protein sequence ID" value="ENSP00000436386.1"/>
    <property type="gene ID" value="ENSG00000135374.11"/>
</dbReference>
<dbReference type="GeneID" id="2001"/>
<dbReference type="KEGG" id="hsa:2001"/>
<dbReference type="MANE-Select" id="ENST00000257832.7">
    <molecule id="Q9UKW6-2"/>
    <property type="protein sequence ID" value="ENSP00000257832.3"/>
    <property type="RefSeq nucleotide sequence ID" value="NM_001422.4"/>
    <property type="RefSeq protein sequence ID" value="NP_001413.1"/>
</dbReference>
<dbReference type="UCSC" id="uc001mvo.2">
    <molecule id="Q9UKW6-1"/>
    <property type="organism name" value="human"/>
</dbReference>
<dbReference type="AGR" id="HGNC:3320"/>
<dbReference type="CTD" id="2001"/>
<dbReference type="DisGeNET" id="2001"/>
<dbReference type="GeneCards" id="ELF5"/>
<dbReference type="HGNC" id="HGNC:3320">
    <property type="gene designation" value="ELF5"/>
</dbReference>
<dbReference type="HPA" id="ENSG00000135374">
    <property type="expression patterns" value="Group enriched (breast, salivary gland)"/>
</dbReference>
<dbReference type="MIM" id="605169">
    <property type="type" value="gene"/>
</dbReference>
<dbReference type="neXtProt" id="NX_Q9UKW6"/>
<dbReference type="OpenTargets" id="ENSG00000135374"/>
<dbReference type="PharmGKB" id="PA27748"/>
<dbReference type="VEuPathDB" id="HostDB:ENSG00000135374"/>
<dbReference type="eggNOG" id="KOG3804">
    <property type="taxonomic scope" value="Eukaryota"/>
</dbReference>
<dbReference type="GeneTree" id="ENSGT00940000160980"/>
<dbReference type="HOGENOM" id="CLU_048172_1_0_1"/>
<dbReference type="InParanoid" id="Q9UKW6"/>
<dbReference type="OrthoDB" id="5961210at2759"/>
<dbReference type="PAN-GO" id="Q9UKW6">
    <property type="GO annotations" value="4 GO annotations based on evolutionary models"/>
</dbReference>
<dbReference type="PhylomeDB" id="Q9UKW6"/>
<dbReference type="TreeFam" id="TF318679"/>
<dbReference type="PathwayCommons" id="Q9UKW6"/>
<dbReference type="SignaLink" id="Q9UKW6"/>
<dbReference type="BioGRID-ORCS" id="2001">
    <property type="hits" value="9 hits in 1170 CRISPR screens"/>
</dbReference>
<dbReference type="ChiTaRS" id="ELF5">
    <property type="organism name" value="human"/>
</dbReference>
<dbReference type="EvolutionaryTrace" id="Q9UKW6"/>
<dbReference type="GeneWiki" id="ELF5"/>
<dbReference type="GenomeRNAi" id="2001"/>
<dbReference type="Pharos" id="Q9UKW6">
    <property type="development level" value="Tbio"/>
</dbReference>
<dbReference type="PRO" id="PR:Q9UKW6"/>
<dbReference type="Proteomes" id="UP000005640">
    <property type="component" value="Chromosome 11"/>
</dbReference>
<dbReference type="RNAct" id="Q9UKW6">
    <property type="molecule type" value="protein"/>
</dbReference>
<dbReference type="Bgee" id="ENSG00000135374">
    <property type="expression patterns" value="Expressed in parotid gland and 101 other cell types or tissues"/>
</dbReference>
<dbReference type="ExpressionAtlas" id="Q9UKW6">
    <property type="expression patterns" value="baseline and differential"/>
</dbReference>
<dbReference type="GO" id="GO:0000785">
    <property type="term" value="C:chromatin"/>
    <property type="evidence" value="ECO:0000247"/>
    <property type="project" value="NTNU_SB"/>
</dbReference>
<dbReference type="GO" id="GO:0005737">
    <property type="term" value="C:cytoplasm"/>
    <property type="evidence" value="ECO:0007669"/>
    <property type="project" value="Ensembl"/>
</dbReference>
<dbReference type="GO" id="GO:0005634">
    <property type="term" value="C:nucleus"/>
    <property type="evidence" value="ECO:0000318"/>
    <property type="project" value="GO_Central"/>
</dbReference>
<dbReference type="GO" id="GO:0001228">
    <property type="term" value="F:DNA-binding transcription activator activity, RNA polymerase II-specific"/>
    <property type="evidence" value="ECO:0007669"/>
    <property type="project" value="Ensembl"/>
</dbReference>
<dbReference type="GO" id="GO:0000981">
    <property type="term" value="F:DNA-binding transcription factor activity, RNA polymerase II-specific"/>
    <property type="evidence" value="ECO:0000247"/>
    <property type="project" value="NTNU_SB"/>
</dbReference>
<dbReference type="GO" id="GO:0000977">
    <property type="term" value="F:RNA polymerase II transcription regulatory region sequence-specific DNA binding"/>
    <property type="evidence" value="ECO:0007669"/>
    <property type="project" value="Ensembl"/>
</dbReference>
<dbReference type="GO" id="GO:1990837">
    <property type="term" value="F:sequence-specific double-stranded DNA binding"/>
    <property type="evidence" value="ECO:0000314"/>
    <property type="project" value="ARUK-UCL"/>
</dbReference>
<dbReference type="GO" id="GO:0030154">
    <property type="term" value="P:cell differentiation"/>
    <property type="evidence" value="ECO:0000318"/>
    <property type="project" value="GO_Central"/>
</dbReference>
<dbReference type="GO" id="GO:0001712">
    <property type="term" value="P:ectodermal cell fate commitment"/>
    <property type="evidence" value="ECO:0007669"/>
    <property type="project" value="Ensembl"/>
</dbReference>
<dbReference type="GO" id="GO:0060644">
    <property type="term" value="P:mammary gland epithelial cell differentiation"/>
    <property type="evidence" value="ECO:0007669"/>
    <property type="project" value="Ensembl"/>
</dbReference>
<dbReference type="GO" id="GO:0060806">
    <property type="term" value="P:negative regulation of cell differentiation involved in embryonic placenta development"/>
    <property type="evidence" value="ECO:0007669"/>
    <property type="project" value="Ensembl"/>
</dbReference>
<dbReference type="GO" id="GO:0006357">
    <property type="term" value="P:regulation of transcription by RNA polymerase II"/>
    <property type="evidence" value="ECO:0000318"/>
    <property type="project" value="GO_Central"/>
</dbReference>
<dbReference type="GO" id="GO:0035019">
    <property type="term" value="P:somatic stem cell population maintenance"/>
    <property type="evidence" value="ECO:0007669"/>
    <property type="project" value="Ensembl"/>
</dbReference>
<dbReference type="GO" id="GO:0060707">
    <property type="term" value="P:trophoblast giant cell differentiation"/>
    <property type="evidence" value="ECO:0007669"/>
    <property type="project" value="Ensembl"/>
</dbReference>
<dbReference type="CDD" id="cd08538">
    <property type="entry name" value="SAM_PNT-ESE-2-like"/>
    <property type="match status" value="1"/>
</dbReference>
<dbReference type="FunFam" id="1.10.150.50:FF:000026">
    <property type="entry name" value="ETS homologous factor isoform X1"/>
    <property type="match status" value="1"/>
</dbReference>
<dbReference type="FunFam" id="1.10.10.10:FF:000244">
    <property type="entry name" value="ETS-related transcription factor Elf-5 isoform X1"/>
    <property type="match status" value="1"/>
</dbReference>
<dbReference type="Gene3D" id="1.10.150.50">
    <property type="entry name" value="Transcription Factor, Ets-1"/>
    <property type="match status" value="1"/>
</dbReference>
<dbReference type="Gene3D" id="1.10.10.10">
    <property type="entry name" value="Winged helix-like DNA-binding domain superfamily/Winged helix DNA-binding domain"/>
    <property type="match status" value="1"/>
</dbReference>
<dbReference type="InterPro" id="IPR000418">
    <property type="entry name" value="Ets_dom"/>
</dbReference>
<dbReference type="InterPro" id="IPR046328">
    <property type="entry name" value="ETS_fam"/>
</dbReference>
<dbReference type="InterPro" id="IPR003118">
    <property type="entry name" value="Pointed_dom"/>
</dbReference>
<dbReference type="InterPro" id="IPR013761">
    <property type="entry name" value="SAM/pointed_sf"/>
</dbReference>
<dbReference type="InterPro" id="IPR036388">
    <property type="entry name" value="WH-like_DNA-bd_sf"/>
</dbReference>
<dbReference type="InterPro" id="IPR036390">
    <property type="entry name" value="WH_DNA-bd_sf"/>
</dbReference>
<dbReference type="PANTHER" id="PTHR11849">
    <property type="entry name" value="ETS"/>
    <property type="match status" value="1"/>
</dbReference>
<dbReference type="PANTHER" id="PTHR11849:SF15">
    <property type="entry name" value="ETS-RELATED TRANSCRIPTION FACTOR ELF-5"/>
    <property type="match status" value="1"/>
</dbReference>
<dbReference type="Pfam" id="PF00178">
    <property type="entry name" value="Ets"/>
    <property type="match status" value="1"/>
</dbReference>
<dbReference type="Pfam" id="PF02198">
    <property type="entry name" value="SAM_PNT"/>
    <property type="match status" value="1"/>
</dbReference>
<dbReference type="PRINTS" id="PR00454">
    <property type="entry name" value="ETSDOMAIN"/>
</dbReference>
<dbReference type="SMART" id="SM00413">
    <property type="entry name" value="ETS"/>
    <property type="match status" value="1"/>
</dbReference>
<dbReference type="SMART" id="SM00251">
    <property type="entry name" value="SAM_PNT"/>
    <property type="match status" value="1"/>
</dbReference>
<dbReference type="SUPFAM" id="SSF47769">
    <property type="entry name" value="SAM/Pointed domain"/>
    <property type="match status" value="1"/>
</dbReference>
<dbReference type="SUPFAM" id="SSF46785">
    <property type="entry name" value="Winged helix' DNA-binding domain"/>
    <property type="match status" value="1"/>
</dbReference>
<dbReference type="PROSITE" id="PS00346">
    <property type="entry name" value="ETS_DOMAIN_2"/>
    <property type="match status" value="1"/>
</dbReference>
<dbReference type="PROSITE" id="PS50061">
    <property type="entry name" value="ETS_DOMAIN_3"/>
    <property type="match status" value="1"/>
</dbReference>
<dbReference type="PROSITE" id="PS51433">
    <property type="entry name" value="PNT"/>
    <property type="match status" value="1"/>
</dbReference>
<organism>
    <name type="scientific">Homo sapiens</name>
    <name type="common">Human</name>
    <dbReference type="NCBI Taxonomy" id="9606"/>
    <lineage>
        <taxon>Eukaryota</taxon>
        <taxon>Metazoa</taxon>
        <taxon>Chordata</taxon>
        <taxon>Craniata</taxon>
        <taxon>Vertebrata</taxon>
        <taxon>Euteleostomi</taxon>
        <taxon>Mammalia</taxon>
        <taxon>Eutheria</taxon>
        <taxon>Euarchontoglires</taxon>
        <taxon>Primates</taxon>
        <taxon>Haplorrhini</taxon>
        <taxon>Catarrhini</taxon>
        <taxon>Hominidae</taxon>
        <taxon>Homo</taxon>
    </lineage>
</organism>
<protein>
    <recommendedName>
        <fullName>ETS-related transcription factor Elf-5</fullName>
    </recommendedName>
    <alternativeName>
        <fullName>E74-like factor 5</fullName>
    </alternativeName>
    <alternativeName>
        <fullName>Epithelium-restricted ESE-1-related Ets factor</fullName>
    </alternativeName>
    <alternativeName>
        <fullName>Epithelium-specific Ets transcription factor 2</fullName>
        <shortName>ESE-2</shortName>
    </alternativeName>
</protein>
<accession>Q9UKW6</accession>
<accession>A6XAE6</accession>
<accession>A8K452</accession>
<accession>O95175</accession>
<accession>Q8N2K9</accession>
<accession>Q96QY3</accession>
<accession>Q9UKW5</accession>
<proteinExistence type="evidence at protein level"/>
<name>ELF5_HUMAN</name>
<comment type="function">
    <text evidence="4">Transcriptionally activator that may play a role in regulating the later stages of keratinocytes terminal differentiation.</text>
</comment>
<comment type="function">
    <text evidence="4">Isoform 2 binds to DNA sequences containing the consensus nucleotide core sequence GGA[AT]. Transcriptionally activates SPRR2A and the parotid gland-specific PSP promoters.</text>
</comment>
<comment type="interaction">
    <interactant intactId="EBI-747605">
        <id>Q9UKW6</id>
    </interactant>
    <interactant intactId="EBI-12102178">
        <id>Q9NS18</id>
        <label>GLRX2</label>
    </interactant>
    <organismsDiffer>false</organismsDiffer>
    <experiments>3</experiments>
</comment>
<comment type="subcellular location">
    <subcellularLocation>
        <location evidence="2">Nucleus</location>
    </subcellularLocation>
</comment>
<comment type="alternative products">
    <event type="alternative splicing"/>
    <isoform>
        <id>Q9UKW6-1</id>
        <name>1</name>
        <name>ESE-2a</name>
        <sequence type="displayed"/>
    </isoform>
    <isoform>
        <id>Q9UKW6-2</id>
        <name>2</name>
        <name>ESE-2b</name>
        <sequence type="described" ref="VSP_014510"/>
    </isoform>
    <isoform>
        <id>Q9UKW6-3</id>
        <name>3</name>
        <sequence type="described" ref="VSP_014510 VSP_014511 VSP_014512"/>
    </isoform>
    <isoform>
        <id>Q9UKW6-4</id>
        <name>4</name>
        <sequence type="described" ref="VSP_014510 VSP_054662"/>
    </isoform>
</comment>
<comment type="tissue specificity">
    <text evidence="4 5">Expressed exclusively in tissues with a high content of epithelial cells. Highly expressed in salivary gland, mammary gland, kidney and prostate. Weakly expressed in placenta and lung. Isoform 1 and isoform 2 are differentially expressed in different tissues. In the kidney, only isoform 1 was expressed, while prostate expressed both isoforms, with levels of isoform 2 being higher. Expression is up-regulated during keratinocyte differentiation. Several epithelial carcinoma cell lines showed lack of expression.</text>
</comment>
<comment type="domain">
    <text evidence="1">The PNT domain acts as a transcriptional activator.</text>
</comment>
<comment type="similarity">
    <text evidence="10">Belongs to the ETS family.</text>
</comment>